<accession>Q86TN4</accession>
<accession>A8MU17</accession>
<accession>A8MYC9</accession>
<accession>F5H2B2</accession>
<accession>Q9BSB9</accession>
<reference key="1">
    <citation type="journal article" date="2003" name="Cell. Mol. Life Sci.">
        <title>A human homolog of the yeast gene encoding tRNA 2'-phosphotransferase: cloning, characterization and complementation analysis.</title>
        <authorList>
            <person name="Hu Q.-D."/>
            <person name="Lu H."/>
            <person name="Huo K."/>
            <person name="Ying K."/>
            <person name="Li J."/>
            <person name="Xie Y."/>
            <person name="Mao Y."/>
            <person name="Li Y.-Y."/>
        </authorList>
    </citation>
    <scope>NUCLEOTIDE SEQUENCE [MRNA] (ISOFORM 1)</scope>
    <scope>FUNCTION</scope>
    <scope>TISSUE SPECIFICITY</scope>
    <scope>VARIANT ARG-172</scope>
    <source>
        <tissue>Fetal brain</tissue>
    </source>
</reference>
<reference key="2">
    <citation type="journal article" date="2006" name="Nature">
        <title>Human chromosome 11 DNA sequence and analysis including novel gene identification.</title>
        <authorList>
            <person name="Taylor T.D."/>
            <person name="Noguchi H."/>
            <person name="Totoki Y."/>
            <person name="Toyoda A."/>
            <person name="Kuroki Y."/>
            <person name="Dewar K."/>
            <person name="Lloyd C."/>
            <person name="Itoh T."/>
            <person name="Takeda T."/>
            <person name="Kim D.-W."/>
            <person name="She X."/>
            <person name="Barlow K.F."/>
            <person name="Bloom T."/>
            <person name="Bruford E."/>
            <person name="Chang J.L."/>
            <person name="Cuomo C.A."/>
            <person name="Eichler E."/>
            <person name="FitzGerald M.G."/>
            <person name="Jaffe D.B."/>
            <person name="LaButti K."/>
            <person name="Nicol R."/>
            <person name="Park H.-S."/>
            <person name="Seaman C."/>
            <person name="Sougnez C."/>
            <person name="Yang X."/>
            <person name="Zimmer A.R."/>
            <person name="Zody M.C."/>
            <person name="Birren B.W."/>
            <person name="Nusbaum C."/>
            <person name="Fujiyama A."/>
            <person name="Hattori M."/>
            <person name="Rogers J."/>
            <person name="Lander E.S."/>
            <person name="Sakaki Y."/>
        </authorList>
    </citation>
    <scope>NUCLEOTIDE SEQUENCE [LARGE SCALE GENOMIC DNA]</scope>
</reference>
<reference key="3">
    <citation type="submission" date="2005-07" db="EMBL/GenBank/DDBJ databases">
        <authorList>
            <person name="Mural R.J."/>
            <person name="Istrail S."/>
            <person name="Sutton G.G."/>
            <person name="Florea L."/>
            <person name="Halpern A.L."/>
            <person name="Mobarry C.M."/>
            <person name="Lippert R."/>
            <person name="Walenz B."/>
            <person name="Shatkay H."/>
            <person name="Dew I."/>
            <person name="Miller J.R."/>
            <person name="Flanigan M.J."/>
            <person name="Edwards N.J."/>
            <person name="Bolanos R."/>
            <person name="Fasulo D."/>
            <person name="Halldorsson B.V."/>
            <person name="Hannenhalli S."/>
            <person name="Turner R."/>
            <person name="Yooseph S."/>
            <person name="Lu F."/>
            <person name="Nusskern D.R."/>
            <person name="Shue B.C."/>
            <person name="Zheng X.H."/>
            <person name="Zhong F."/>
            <person name="Delcher A.L."/>
            <person name="Huson D.H."/>
            <person name="Kravitz S.A."/>
            <person name="Mouchard L."/>
            <person name="Reinert K."/>
            <person name="Remington K.A."/>
            <person name="Clark A.G."/>
            <person name="Waterman M.S."/>
            <person name="Eichler E.E."/>
            <person name="Adams M.D."/>
            <person name="Hunkapiller M.W."/>
            <person name="Myers E.W."/>
            <person name="Venter J.C."/>
        </authorList>
    </citation>
    <scope>NUCLEOTIDE SEQUENCE [LARGE SCALE GENOMIC DNA]</scope>
</reference>
<reference key="4">
    <citation type="journal article" date="2004" name="Genome Res.">
        <title>The status, quality, and expansion of the NIH full-length cDNA project: the Mammalian Gene Collection (MGC).</title>
        <authorList>
            <consortium name="The MGC Project Team"/>
        </authorList>
    </citation>
    <scope>NUCLEOTIDE SEQUENCE [LARGE SCALE MRNA] (ISOFORMS 2 AND 3)</scope>
    <scope>VARIANT ARG-172</scope>
    <source>
        <tissue>Epidermal carcinoma</tissue>
        <tissue>Ovary</tissue>
    </source>
</reference>
<reference key="5">
    <citation type="journal article" date="2008" name="Proc. Natl. Acad. Sci. U.S.A.">
        <title>A quantitative atlas of mitotic phosphorylation.</title>
        <authorList>
            <person name="Dephoure N."/>
            <person name="Zhou C."/>
            <person name="Villen J."/>
            <person name="Beausoleil S.A."/>
            <person name="Bakalarski C.E."/>
            <person name="Elledge S.J."/>
            <person name="Gygi S.P."/>
        </authorList>
    </citation>
    <scope>IDENTIFICATION BY MASS SPECTROMETRY [LARGE SCALE ANALYSIS]</scope>
    <source>
        <tissue>Cervix carcinoma</tissue>
    </source>
</reference>
<reference key="6">
    <citation type="journal article" date="2009" name="Anal. Chem.">
        <title>Lys-N and trypsin cover complementary parts of the phosphoproteome in a refined SCX-based approach.</title>
        <authorList>
            <person name="Gauci S."/>
            <person name="Helbig A.O."/>
            <person name="Slijper M."/>
            <person name="Krijgsveld J."/>
            <person name="Heck A.J."/>
            <person name="Mohammed S."/>
        </authorList>
    </citation>
    <scope>IDENTIFICATION BY MASS SPECTROMETRY [LARGE SCALE ANALYSIS]</scope>
</reference>
<reference key="7">
    <citation type="journal article" date="2009" name="Sci. Signal.">
        <title>Quantitative phosphoproteomic analysis of T cell receptor signaling reveals system-wide modulation of protein-protein interactions.</title>
        <authorList>
            <person name="Mayya V."/>
            <person name="Lundgren D.H."/>
            <person name="Hwang S.-I."/>
            <person name="Rezaul K."/>
            <person name="Wu L."/>
            <person name="Eng J.K."/>
            <person name="Rodionov V."/>
            <person name="Han D.K."/>
        </authorList>
    </citation>
    <scope>PHOSPHORYLATION [LARGE SCALE ANALYSIS] AT SER-240</scope>
    <scope>IDENTIFICATION BY MASS SPECTROMETRY [LARGE SCALE ANALYSIS]</scope>
    <source>
        <tissue>Leukemic T-cell</tissue>
    </source>
</reference>
<reference key="8">
    <citation type="journal article" date="2012" name="Proc. Natl. Acad. Sci. U.S.A.">
        <title>N-terminal acetylome analyses and functional insights of the N-terminal acetyltransferase NatB.</title>
        <authorList>
            <person name="Van Damme P."/>
            <person name="Lasa M."/>
            <person name="Polevoda B."/>
            <person name="Gazquez C."/>
            <person name="Elosegui-Artola A."/>
            <person name="Kim D.S."/>
            <person name="De Juan-Pardo E."/>
            <person name="Demeyer K."/>
            <person name="Hole K."/>
            <person name="Larrea E."/>
            <person name="Timmerman E."/>
            <person name="Prieto J."/>
            <person name="Arnesen T."/>
            <person name="Sherman F."/>
            <person name="Gevaert K."/>
            <person name="Aldabe R."/>
        </authorList>
    </citation>
    <scope>ACETYLATION [LARGE SCALE ANALYSIS] AT MET-1</scope>
    <scope>IDENTIFICATION BY MASS SPECTROMETRY [LARGE SCALE ANALYSIS]</scope>
</reference>
<reference key="9">
    <citation type="journal article" date="2013" name="J. Proteome Res.">
        <title>Toward a comprehensive characterization of a human cancer cell phosphoproteome.</title>
        <authorList>
            <person name="Zhou H."/>
            <person name="Di Palma S."/>
            <person name="Preisinger C."/>
            <person name="Peng M."/>
            <person name="Polat A.N."/>
            <person name="Heck A.J."/>
            <person name="Mohammed S."/>
        </authorList>
    </citation>
    <scope>PHOSPHORYLATION [LARGE SCALE ANALYSIS] AT SER-240</scope>
    <scope>IDENTIFICATION BY MASS SPECTROMETRY [LARGE SCALE ANALYSIS]</scope>
    <source>
        <tissue>Cervix carcinoma</tissue>
        <tissue>Erythroleukemia</tissue>
    </source>
</reference>
<evidence type="ECO:0000256" key="1">
    <source>
        <dbReference type="SAM" id="MobiDB-lite"/>
    </source>
</evidence>
<evidence type="ECO:0000269" key="2">
    <source>
    </source>
</evidence>
<evidence type="ECO:0000269" key="3">
    <source>
    </source>
</evidence>
<evidence type="ECO:0000303" key="4">
    <source>
    </source>
</evidence>
<evidence type="ECO:0000305" key="5"/>
<evidence type="ECO:0000305" key="6">
    <source>
    </source>
</evidence>
<evidence type="ECO:0007744" key="7">
    <source>
    </source>
</evidence>
<evidence type="ECO:0007744" key="8">
    <source>
    </source>
</evidence>
<evidence type="ECO:0007744" key="9">
    <source>
    </source>
</evidence>
<evidence type="ECO:0007829" key="10">
    <source>
        <dbReference type="PDB" id="7YW3"/>
    </source>
</evidence>
<comment type="function">
    <text evidence="6">Catalyzes the last step of tRNA splicing, the transfer of the splice junction 2'-phosphate from ligated tRNA to NAD to produce ADP-ribose 1''-2'' cyclic phosphate.</text>
</comment>
<comment type="catalytic activity">
    <reaction>
        <text>2'-phospho-[ligated tRNA] + NAD(+) = mature tRNA + ADP-alpha-D-ribose 1'',2''-cyclic phosphate + nicotinamide</text>
        <dbReference type="Rhea" id="RHEA:23324"/>
        <dbReference type="Rhea" id="RHEA-COMP:11106"/>
        <dbReference type="Rhea" id="RHEA-COMP:11107"/>
        <dbReference type="ChEBI" id="CHEBI:17154"/>
        <dbReference type="ChEBI" id="CHEBI:57540"/>
        <dbReference type="ChEBI" id="CHEBI:76596"/>
        <dbReference type="ChEBI" id="CHEBI:82883"/>
        <dbReference type="ChEBI" id="CHEBI:85027"/>
        <dbReference type="EC" id="2.7.1.160"/>
    </reaction>
</comment>
<comment type="interaction">
    <interactant intactId="EBI-12403619">
        <id>Q86TN4-2</id>
    </interactant>
    <interactant intactId="EBI-739467">
        <id>Q9H8Y8</id>
        <label>GORASP2</label>
    </interactant>
    <organismsDiffer>false</organismsDiffer>
    <experiments>3</experiments>
</comment>
<comment type="interaction">
    <interactant intactId="EBI-12403619">
        <id>Q86TN4-2</id>
    </interactant>
    <interactant intactId="EBI-355744">
        <id>Q12933</id>
        <label>TRAF2</label>
    </interactant>
    <organismsDiffer>false</organismsDiffer>
    <experiments>3</experiments>
</comment>
<comment type="alternative products">
    <event type="alternative splicing"/>
    <isoform>
        <id>Q86TN4-1</id>
        <name>1</name>
        <sequence type="displayed"/>
    </isoform>
    <isoform>
        <id>Q86TN4-2</id>
        <name>2</name>
        <sequence type="described" ref="VSP_022524"/>
    </isoform>
    <isoform>
        <id>Q86TN4-3</id>
        <name>3</name>
        <sequence type="described" ref="VSP_045273"/>
    </isoform>
    <isoform>
        <id>Q86TN4-4</id>
        <name>4</name>
        <sequence type="described" ref="VSP_045827"/>
    </isoform>
</comment>
<comment type="tissue specificity">
    <text evidence="2">Widely expressed. Weakly or not expressed in lung, spleen, small intestine and peripheral blood leukocytes.</text>
</comment>
<comment type="similarity">
    <text evidence="5">Belongs to the KptA/TPT1 family.</text>
</comment>
<feature type="chain" id="PRO_0000273363" description="tRNA 2'-phosphotransferase 1">
    <location>
        <begin position="1"/>
        <end position="253"/>
    </location>
</feature>
<feature type="region of interest" description="Disordered" evidence="1">
    <location>
        <begin position="1"/>
        <end position="29"/>
    </location>
</feature>
<feature type="region of interest" description="Disordered" evidence="1">
    <location>
        <begin position="225"/>
        <end position="253"/>
    </location>
</feature>
<feature type="compositionally biased region" description="Basic residues" evidence="1">
    <location>
        <begin position="243"/>
        <end position="253"/>
    </location>
</feature>
<feature type="modified residue" description="N-acetylmethionine" evidence="8">
    <location>
        <position position="1"/>
    </location>
</feature>
<feature type="modified residue" description="Phosphoserine" evidence="7 9">
    <location>
        <position position="240"/>
    </location>
</feature>
<feature type="splice variant" id="VSP_022524" description="In isoform 2." evidence="4">
    <location>
        <begin position="1"/>
        <end position="49"/>
    </location>
</feature>
<feature type="splice variant" id="VSP_045827" description="In isoform 4." evidence="5">
    <original>Q</original>
    <variation>QVG</variation>
    <location>
        <position position="109"/>
    </location>
</feature>
<feature type="splice variant" id="VSP_045273" description="In isoform 3." evidence="4">
    <original>DGIPFFRSANGVILTPGNTDGFLLPKYFKEALQLRPTR</original>
    <variation>G</variation>
    <location>
        <begin position="187"/>
        <end position="224"/>
    </location>
</feature>
<feature type="sequence variant" id="VAR_030134" description="In dbSNP:rs12788168.">
    <original>F</original>
    <variation>L</variation>
    <location>
        <position position="3"/>
    </location>
</feature>
<feature type="sequence variant" id="VAR_030135" description="In dbSNP:rs1059440." evidence="2 3">
    <original>H</original>
    <variation>R</variation>
    <location>
        <position position="172"/>
    </location>
</feature>
<feature type="sequence variant" id="VAR_030136" description="In dbSNP:rs11549690.">
    <original>R</original>
    <variation>C</variation>
    <location>
        <position position="221"/>
    </location>
</feature>
<feature type="helix" evidence="10">
    <location>
        <begin position="26"/>
        <end position="40"/>
    </location>
</feature>
<feature type="turn" evidence="10">
    <location>
        <begin position="44"/>
        <end position="47"/>
    </location>
</feature>
<feature type="helix" evidence="10">
    <location>
        <begin position="58"/>
        <end position="62"/>
    </location>
</feature>
<feature type="turn" evidence="10">
    <location>
        <begin position="65"/>
        <end position="69"/>
    </location>
</feature>
<feature type="helix" evidence="10">
    <location>
        <begin position="72"/>
        <end position="81"/>
    </location>
</feature>
<feature type="strand" evidence="10">
    <location>
        <begin position="87"/>
        <end position="93"/>
    </location>
</feature>
<feature type="turn" evidence="10">
    <location>
        <begin position="94"/>
        <end position="96"/>
    </location>
</feature>
<feature type="strand" evidence="10">
    <location>
        <begin position="97"/>
        <end position="104"/>
    </location>
</feature>
<feature type="strand" evidence="10">
    <location>
        <begin position="115"/>
        <end position="117"/>
    </location>
</feature>
<feature type="helix" evidence="10">
    <location>
        <begin position="121"/>
        <end position="123"/>
    </location>
</feature>
<feature type="strand" evidence="10">
    <location>
        <begin position="128"/>
        <end position="132"/>
    </location>
</feature>
<feature type="turn" evidence="10">
    <location>
        <begin position="134"/>
        <end position="136"/>
    </location>
</feature>
<feature type="helix" evidence="10">
    <location>
        <begin position="137"/>
        <end position="143"/>
    </location>
</feature>
<feature type="strand" evidence="10">
    <location>
        <begin position="150"/>
        <end position="158"/>
    </location>
</feature>
<feature type="strand" evidence="10">
    <location>
        <begin position="174"/>
        <end position="179"/>
    </location>
</feature>
<feature type="helix" evidence="10">
    <location>
        <begin position="181"/>
        <end position="186"/>
    </location>
</feature>
<feature type="strand" evidence="10">
    <location>
        <begin position="192"/>
        <end position="194"/>
    </location>
</feature>
<feature type="strand" evidence="10">
    <location>
        <begin position="199"/>
        <end position="201"/>
    </location>
</feature>
<feature type="strand" evidence="10">
    <location>
        <begin position="204"/>
        <end position="209"/>
    </location>
</feature>
<feature type="helix" evidence="10">
    <location>
        <begin position="211"/>
        <end position="213"/>
    </location>
</feature>
<feature type="strand" evidence="10">
    <location>
        <begin position="214"/>
        <end position="219"/>
    </location>
</feature>
<feature type="strand" evidence="10">
    <location>
        <begin position="221"/>
        <end position="223"/>
    </location>
</feature>
<proteinExistence type="evidence at protein level"/>
<organism>
    <name type="scientific">Homo sapiens</name>
    <name type="common">Human</name>
    <dbReference type="NCBI Taxonomy" id="9606"/>
    <lineage>
        <taxon>Eukaryota</taxon>
        <taxon>Metazoa</taxon>
        <taxon>Chordata</taxon>
        <taxon>Craniata</taxon>
        <taxon>Vertebrata</taxon>
        <taxon>Euteleostomi</taxon>
        <taxon>Mammalia</taxon>
        <taxon>Eutheria</taxon>
        <taxon>Euarchontoglires</taxon>
        <taxon>Primates</taxon>
        <taxon>Haplorrhini</taxon>
        <taxon>Catarrhini</taxon>
        <taxon>Hominidae</taxon>
        <taxon>Homo</taxon>
    </lineage>
</organism>
<keyword id="KW-0002">3D-structure</keyword>
<keyword id="KW-0007">Acetylation</keyword>
<keyword id="KW-0025">Alternative splicing</keyword>
<keyword id="KW-0520">NAD</keyword>
<keyword id="KW-0597">Phosphoprotein</keyword>
<keyword id="KW-1267">Proteomics identification</keyword>
<keyword id="KW-1185">Reference proteome</keyword>
<keyword id="KW-0808">Transferase</keyword>
<keyword id="KW-0819">tRNA processing</keyword>
<protein>
    <recommendedName>
        <fullName>tRNA 2'-phosphotransferase 1</fullName>
        <ecNumber>2.7.1.160</ecNumber>
    </recommendedName>
</protein>
<name>TRPT1_HUMAN</name>
<sequence length="253" mass="27742">MNFSGGGRQEAAGSRGRRAPRPREQDRDVQLSKALSYALRHGALKLGLPMGADGFVPLGTLLQLPQFRGFSAEDVQRVVDTNRKQRFALQLGDPSTGLLIRANQGHSLQVPKLELMPLETPQALPPMLVHGTFWKHWPSILLKGLSCQGRTHIHLAPGLPGDPGIISGMRSHCEIAVFIDGPLALADGIPFFRSANGVILTPGNTDGFLLPKYFKEALQLRPTRKPLSLAGDEETECQSSPKHSSRERRRIQQ</sequence>
<gene>
    <name type="primary">TRPT1</name>
</gene>
<dbReference type="EC" id="2.7.1.160"/>
<dbReference type="EMBL" id="AY211494">
    <property type="protein sequence ID" value="AAO62941.1"/>
    <property type="molecule type" value="mRNA"/>
</dbReference>
<dbReference type="EMBL" id="AP005668">
    <property type="status" value="NOT_ANNOTATED_CDS"/>
    <property type="molecule type" value="Genomic_DNA"/>
</dbReference>
<dbReference type="EMBL" id="AP006334">
    <property type="status" value="NOT_ANNOTATED_CDS"/>
    <property type="molecule type" value="Genomic_DNA"/>
</dbReference>
<dbReference type="EMBL" id="CH471076">
    <property type="protein sequence ID" value="EAW74202.1"/>
    <property type="molecule type" value="Genomic_DNA"/>
</dbReference>
<dbReference type="EMBL" id="BC005133">
    <property type="protein sequence ID" value="AAH05133.1"/>
    <property type="molecule type" value="mRNA"/>
</dbReference>
<dbReference type="EMBL" id="BQ672032">
    <property type="status" value="NOT_ANNOTATED_CDS"/>
    <property type="molecule type" value="mRNA"/>
</dbReference>
<dbReference type="CCDS" id="CCDS31595.1">
    <molecule id="Q86TN4-1"/>
</dbReference>
<dbReference type="CCDS" id="CCDS44639.1">
    <molecule id="Q86TN4-2"/>
</dbReference>
<dbReference type="CCDS" id="CCDS53652.1">
    <molecule id="Q86TN4-4"/>
</dbReference>
<dbReference type="CCDS" id="CCDS53653.1">
    <molecule id="Q86TN4-3"/>
</dbReference>
<dbReference type="RefSeq" id="NP_001028850.2">
    <molecule id="Q86TN4-1"/>
    <property type="nucleotide sequence ID" value="NM_001033678.4"/>
</dbReference>
<dbReference type="RefSeq" id="NP_001153861.1">
    <molecule id="Q86TN4-4"/>
    <property type="nucleotide sequence ID" value="NM_001160389.2"/>
</dbReference>
<dbReference type="RefSeq" id="NP_001153862.1">
    <molecule id="Q86TN4-1"/>
    <property type="nucleotide sequence ID" value="NM_001160390.2"/>
</dbReference>
<dbReference type="RefSeq" id="NP_001153864.1">
    <molecule id="Q86TN4-3"/>
    <property type="nucleotide sequence ID" value="NM_001160392.2"/>
</dbReference>
<dbReference type="RefSeq" id="NP_001153865.1">
    <property type="nucleotide sequence ID" value="NM_001160393.1"/>
</dbReference>
<dbReference type="RefSeq" id="NP_001317227.1">
    <property type="nucleotide sequence ID" value="NM_001330298.1"/>
</dbReference>
<dbReference type="RefSeq" id="NP_113660.1">
    <molecule id="Q86TN4-2"/>
    <property type="nucleotide sequence ID" value="NM_031472.4"/>
</dbReference>
<dbReference type="RefSeq" id="XP_024304476.1">
    <molecule id="Q86TN4-1"/>
    <property type="nucleotide sequence ID" value="XM_024448708.2"/>
</dbReference>
<dbReference type="RefSeq" id="XP_024304477.1">
    <molecule id="Q86TN4-1"/>
    <property type="nucleotide sequence ID" value="XM_024448709.2"/>
</dbReference>
<dbReference type="RefSeq" id="XP_047283635.1">
    <molecule id="Q86TN4-3"/>
    <property type="nucleotide sequence ID" value="XM_047427679.1"/>
</dbReference>
<dbReference type="RefSeq" id="XP_047283636.1">
    <molecule id="Q86TN4-3"/>
    <property type="nucleotide sequence ID" value="XM_047427680.1"/>
</dbReference>
<dbReference type="RefSeq" id="XP_047283637.1">
    <molecule id="Q86TN4-2"/>
    <property type="nucleotide sequence ID" value="XM_047427681.1"/>
</dbReference>
<dbReference type="RefSeq" id="XP_054226109.1">
    <molecule id="Q86TN4-1"/>
    <property type="nucleotide sequence ID" value="XM_054370134.1"/>
</dbReference>
<dbReference type="RefSeq" id="XP_054226111.1">
    <molecule id="Q86TN4-1"/>
    <property type="nucleotide sequence ID" value="XM_054370136.1"/>
</dbReference>
<dbReference type="RefSeq" id="XP_054226112.1">
    <molecule id="Q86TN4-3"/>
    <property type="nucleotide sequence ID" value="XM_054370137.1"/>
</dbReference>
<dbReference type="RefSeq" id="XP_054226114.1">
    <molecule id="Q86TN4-3"/>
    <property type="nucleotide sequence ID" value="XM_054370139.1"/>
</dbReference>
<dbReference type="RefSeq" id="XP_054226117.1">
    <molecule id="Q86TN4-2"/>
    <property type="nucleotide sequence ID" value="XM_054370142.1"/>
</dbReference>
<dbReference type="PDB" id="7YW3">
    <property type="method" value="X-ray"/>
    <property type="resolution" value="2.50 A"/>
    <property type="chains" value="A=1-253"/>
</dbReference>
<dbReference type="PDBsum" id="7YW3"/>
<dbReference type="SMR" id="Q86TN4"/>
<dbReference type="BioGRID" id="123736">
    <property type="interactions" value="16"/>
</dbReference>
<dbReference type="FunCoup" id="Q86TN4">
    <property type="interactions" value="157"/>
</dbReference>
<dbReference type="IntAct" id="Q86TN4">
    <property type="interactions" value="9"/>
</dbReference>
<dbReference type="MINT" id="Q86TN4"/>
<dbReference type="STRING" id="9606.ENSP00000378050"/>
<dbReference type="GlyGen" id="Q86TN4">
    <property type="glycosylation" value="1 site, 1 O-linked glycan (1 site)"/>
</dbReference>
<dbReference type="iPTMnet" id="Q86TN4"/>
<dbReference type="PhosphoSitePlus" id="Q86TN4"/>
<dbReference type="BioMuta" id="TRPT1"/>
<dbReference type="DMDM" id="124053420"/>
<dbReference type="jPOST" id="Q86TN4"/>
<dbReference type="MassIVE" id="Q86TN4"/>
<dbReference type="PaxDb" id="9606-ENSP00000378050"/>
<dbReference type="PeptideAtlas" id="Q86TN4"/>
<dbReference type="ProteomicsDB" id="2072"/>
<dbReference type="ProteomicsDB" id="25919"/>
<dbReference type="ProteomicsDB" id="69716">
    <molecule id="Q86TN4-1"/>
</dbReference>
<dbReference type="ProteomicsDB" id="69717">
    <molecule id="Q86TN4-2"/>
</dbReference>
<dbReference type="Pumba" id="Q86TN4"/>
<dbReference type="Antibodypedia" id="51851">
    <property type="antibodies" value="34 antibodies from 14 providers"/>
</dbReference>
<dbReference type="DNASU" id="83707"/>
<dbReference type="Ensembl" id="ENST00000317459.11">
    <molecule id="Q86TN4-1"/>
    <property type="protein sequence ID" value="ENSP00000314073.6"/>
    <property type="gene ID" value="ENSG00000149743.14"/>
</dbReference>
<dbReference type="Ensembl" id="ENST00000394546.6">
    <molecule id="Q86TN4-4"/>
    <property type="protein sequence ID" value="ENSP00000378050.2"/>
    <property type="gene ID" value="ENSG00000149743.14"/>
</dbReference>
<dbReference type="Ensembl" id="ENST00000394547.7">
    <molecule id="Q86TN4-2"/>
    <property type="protein sequence ID" value="ENSP00000378051.3"/>
    <property type="gene ID" value="ENSG00000149743.14"/>
</dbReference>
<dbReference type="Ensembl" id="ENST00000541278.5">
    <molecule id="Q86TN4-3"/>
    <property type="protein sequence ID" value="ENSP00000438683.1"/>
    <property type="gene ID" value="ENSG00000149743.14"/>
</dbReference>
<dbReference type="GeneID" id="83707"/>
<dbReference type="KEGG" id="hsa:83707"/>
<dbReference type="MANE-Select" id="ENST00000317459.11">
    <property type="protein sequence ID" value="ENSP00000314073.6"/>
    <property type="RefSeq nucleotide sequence ID" value="NM_001033678.4"/>
    <property type="RefSeq protein sequence ID" value="NP_001028850.2"/>
</dbReference>
<dbReference type="UCSC" id="uc001nyn.4">
    <molecule id="Q86TN4-1"/>
    <property type="organism name" value="human"/>
</dbReference>
<dbReference type="AGR" id="HGNC:20316"/>
<dbReference type="CTD" id="83707"/>
<dbReference type="GeneCards" id="TRPT1"/>
<dbReference type="HGNC" id="HGNC:20316">
    <property type="gene designation" value="TRPT1"/>
</dbReference>
<dbReference type="HPA" id="ENSG00000149743">
    <property type="expression patterns" value="Tissue enhanced (skeletal)"/>
</dbReference>
<dbReference type="MIM" id="610470">
    <property type="type" value="gene"/>
</dbReference>
<dbReference type="neXtProt" id="NX_Q86TN4"/>
<dbReference type="OpenTargets" id="ENSG00000149743"/>
<dbReference type="PharmGKB" id="PA134964265"/>
<dbReference type="VEuPathDB" id="HostDB:ENSG00000149743"/>
<dbReference type="eggNOG" id="KOG2278">
    <property type="taxonomic scope" value="Eukaryota"/>
</dbReference>
<dbReference type="GeneTree" id="ENSGT00390000002731"/>
<dbReference type="InParanoid" id="Q86TN4"/>
<dbReference type="OMA" id="RHGASQM"/>
<dbReference type="OrthoDB" id="419694at2759"/>
<dbReference type="PAN-GO" id="Q86TN4">
    <property type="GO annotations" value="2 GO annotations based on evolutionary models"/>
</dbReference>
<dbReference type="PhylomeDB" id="Q86TN4"/>
<dbReference type="TreeFam" id="TF324127"/>
<dbReference type="BRENDA" id="2.7.1.160">
    <property type="organism ID" value="2681"/>
</dbReference>
<dbReference type="PathwayCommons" id="Q86TN4"/>
<dbReference type="SignaLink" id="Q86TN4"/>
<dbReference type="BioGRID-ORCS" id="83707">
    <property type="hits" value="21 hits in 1155 CRISPR screens"/>
</dbReference>
<dbReference type="ChiTaRS" id="TRPT1">
    <property type="organism name" value="human"/>
</dbReference>
<dbReference type="GeneWiki" id="TRPT1"/>
<dbReference type="GenomeRNAi" id="83707"/>
<dbReference type="Pharos" id="Q86TN4">
    <property type="development level" value="Tdark"/>
</dbReference>
<dbReference type="PRO" id="PR:Q86TN4"/>
<dbReference type="Proteomes" id="UP000005640">
    <property type="component" value="Chromosome 11"/>
</dbReference>
<dbReference type="RNAct" id="Q86TN4">
    <property type="molecule type" value="protein"/>
</dbReference>
<dbReference type="Bgee" id="ENSG00000149743">
    <property type="expression patterns" value="Expressed in gastrocnemius and 175 other cell types or tissues"/>
</dbReference>
<dbReference type="ExpressionAtlas" id="Q86TN4">
    <property type="expression patterns" value="baseline and differential"/>
</dbReference>
<dbReference type="GO" id="GO:0000215">
    <property type="term" value="F:tRNA 2'-phosphotransferase activity"/>
    <property type="evidence" value="ECO:0000318"/>
    <property type="project" value="GO_Central"/>
</dbReference>
<dbReference type="GO" id="GO:0006388">
    <property type="term" value="P:tRNA splicing, via endonucleolytic cleavage and ligation"/>
    <property type="evidence" value="ECO:0000318"/>
    <property type="project" value="GO_Central"/>
</dbReference>
<dbReference type="Gene3D" id="3.20.170.30">
    <property type="match status" value="1"/>
</dbReference>
<dbReference type="Gene3D" id="1.10.10.970">
    <property type="entry name" value="RNA 2'-phosphotransferase, Tpt1/KptA family, N-terminal domain"/>
    <property type="match status" value="1"/>
</dbReference>
<dbReference type="InterPro" id="IPR002745">
    <property type="entry name" value="Ptrans_KptA/Tpt1"/>
</dbReference>
<dbReference type="InterPro" id="IPR042081">
    <property type="entry name" value="RNA_2'-PTrans_C"/>
</dbReference>
<dbReference type="InterPro" id="IPR042080">
    <property type="entry name" value="RNA_2'-PTrans_N"/>
</dbReference>
<dbReference type="PANTHER" id="PTHR12684">
    <property type="entry name" value="PUTATIVE PHOSPHOTRANSFERASE"/>
    <property type="match status" value="1"/>
</dbReference>
<dbReference type="PANTHER" id="PTHR12684:SF2">
    <property type="entry name" value="TRNA 2'-PHOSPHOTRANSFERASE 1"/>
    <property type="match status" value="1"/>
</dbReference>
<dbReference type="Pfam" id="PF01885">
    <property type="entry name" value="PTS_2-RNA"/>
    <property type="match status" value="1"/>
</dbReference>
<dbReference type="SUPFAM" id="SSF56399">
    <property type="entry name" value="ADP-ribosylation"/>
    <property type="match status" value="1"/>
</dbReference>